<feature type="chain" id="PRO_0000256123" description="ATP synthase subunit alpha, chloroplastic">
    <location>
        <begin position="1"/>
        <end position="507"/>
    </location>
</feature>
<feature type="binding site" evidence="1">
    <location>
        <begin position="170"/>
        <end position="177"/>
    </location>
    <ligand>
        <name>ATP</name>
        <dbReference type="ChEBI" id="CHEBI:30616"/>
    </ligand>
</feature>
<feature type="site" description="Required for activity" evidence="1">
    <location>
        <position position="363"/>
    </location>
</feature>
<sequence length="507" mass="55322">MVTIRADEISNIIRERIEQYNREVKIVNTGTVLQVGDGIARIYGLDEVMAGELVEFEEGTIGIALNLESNNVGVVLMGDGLMIQEGSSVKATGKIAQIPVSEAYLGRVINALAKPIDGRGAISSSESRLIESPAPGIISRRSVYEPLQTGLIAIDSMIPIGRGQRELIIGDRQTGKTAVATDTILNQQGQNVICVYVAIGQKASSVAQVVNALQERGAMEYTIVVAETADSPATLQYLAPYTGAALAEYFMYRERHTLIIYDDLSKQAQAYRQMSLLLRRPPGREAYPGDVFYLHSRLLERAAKPSSSLGEGSMTALPIVETQSGDVSAYIPTNVISITDGQIFLSADLFNAGIRPAINVGISVSRVGSAAQIKAMKQVAGKLKLELAQFAELEAFAQFASDLDKATQNQLARGQRLRELLKQSQAAPFTVAEQIMTIYTGTNGYLDSLEIGQVRKFLVELRTYLKTSKTQFQEIISSTKTFTEEAEALLKEAIQEQMERFLLQEQV</sequence>
<comment type="function">
    <text evidence="1">Produces ATP from ADP in the presence of a proton gradient across the membrane. The alpha chain is a regulatory subunit.</text>
</comment>
<comment type="catalytic activity">
    <reaction evidence="1">
        <text>ATP + H2O + 4 H(+)(in) = ADP + phosphate + 5 H(+)(out)</text>
        <dbReference type="Rhea" id="RHEA:57720"/>
        <dbReference type="ChEBI" id="CHEBI:15377"/>
        <dbReference type="ChEBI" id="CHEBI:15378"/>
        <dbReference type="ChEBI" id="CHEBI:30616"/>
        <dbReference type="ChEBI" id="CHEBI:43474"/>
        <dbReference type="ChEBI" id="CHEBI:456216"/>
        <dbReference type="EC" id="7.1.2.2"/>
    </reaction>
</comment>
<comment type="subunit">
    <text evidence="1">F-type ATPases have 2 components, CF(1) - the catalytic core - and CF(0) - the membrane proton channel. CF(1) has five subunits: alpha(3), beta(3), gamma(1), delta(1), epsilon(1). CF(0) has four main subunits: a, b, b' and c.</text>
</comment>
<comment type="subcellular location">
    <subcellularLocation>
        <location evidence="1">Plastid</location>
        <location evidence="1">Chloroplast thylakoid membrane</location>
        <topology evidence="1">Peripheral membrane protein</topology>
    </subcellularLocation>
</comment>
<comment type="similarity">
    <text evidence="1">Belongs to the ATPase alpha/beta chains family.</text>
</comment>
<organism>
    <name type="scientific">Populus alba</name>
    <name type="common">White poplar</name>
    <dbReference type="NCBI Taxonomy" id="43335"/>
    <lineage>
        <taxon>Eukaryota</taxon>
        <taxon>Viridiplantae</taxon>
        <taxon>Streptophyta</taxon>
        <taxon>Embryophyta</taxon>
        <taxon>Tracheophyta</taxon>
        <taxon>Spermatophyta</taxon>
        <taxon>Magnoliopsida</taxon>
        <taxon>eudicotyledons</taxon>
        <taxon>Gunneridae</taxon>
        <taxon>Pentapetalae</taxon>
        <taxon>rosids</taxon>
        <taxon>fabids</taxon>
        <taxon>Malpighiales</taxon>
        <taxon>Salicaceae</taxon>
        <taxon>Saliceae</taxon>
        <taxon>Populus</taxon>
    </lineage>
</organism>
<gene>
    <name evidence="1" type="primary">atpA</name>
</gene>
<accession>Q14FH2</accession>
<geneLocation type="chloroplast"/>
<dbReference type="EC" id="7.1.2.2" evidence="1"/>
<dbReference type="EMBL" id="AP008956">
    <property type="protein sequence ID" value="BAE97190.1"/>
    <property type="molecule type" value="Genomic_DNA"/>
</dbReference>
<dbReference type="RefSeq" id="YP_665543.1">
    <property type="nucleotide sequence ID" value="NC_008235.1"/>
</dbReference>
<dbReference type="SMR" id="Q14FH2"/>
<dbReference type="GeneID" id="4178218"/>
<dbReference type="KEGG" id="palz:4178218"/>
<dbReference type="OrthoDB" id="13372at3646"/>
<dbReference type="GO" id="GO:0009535">
    <property type="term" value="C:chloroplast thylakoid membrane"/>
    <property type="evidence" value="ECO:0007669"/>
    <property type="project" value="UniProtKB-SubCell"/>
</dbReference>
<dbReference type="GO" id="GO:0045259">
    <property type="term" value="C:proton-transporting ATP synthase complex"/>
    <property type="evidence" value="ECO:0007669"/>
    <property type="project" value="UniProtKB-KW"/>
</dbReference>
<dbReference type="GO" id="GO:0043531">
    <property type="term" value="F:ADP binding"/>
    <property type="evidence" value="ECO:0007669"/>
    <property type="project" value="TreeGrafter"/>
</dbReference>
<dbReference type="GO" id="GO:0005524">
    <property type="term" value="F:ATP binding"/>
    <property type="evidence" value="ECO:0007669"/>
    <property type="project" value="UniProtKB-UniRule"/>
</dbReference>
<dbReference type="GO" id="GO:0046933">
    <property type="term" value="F:proton-transporting ATP synthase activity, rotational mechanism"/>
    <property type="evidence" value="ECO:0007669"/>
    <property type="project" value="UniProtKB-UniRule"/>
</dbReference>
<dbReference type="CDD" id="cd18113">
    <property type="entry name" value="ATP-synt_F1_alpha_C"/>
    <property type="match status" value="1"/>
</dbReference>
<dbReference type="CDD" id="cd18116">
    <property type="entry name" value="ATP-synt_F1_alpha_N"/>
    <property type="match status" value="1"/>
</dbReference>
<dbReference type="CDD" id="cd01132">
    <property type="entry name" value="F1-ATPase_alpha_CD"/>
    <property type="match status" value="1"/>
</dbReference>
<dbReference type="FunFam" id="1.20.150.20:FF:000001">
    <property type="entry name" value="ATP synthase subunit alpha"/>
    <property type="match status" value="1"/>
</dbReference>
<dbReference type="FunFam" id="2.40.30.20:FF:000001">
    <property type="entry name" value="ATP synthase subunit alpha"/>
    <property type="match status" value="1"/>
</dbReference>
<dbReference type="FunFam" id="3.40.50.300:FF:000002">
    <property type="entry name" value="ATP synthase subunit alpha"/>
    <property type="match status" value="1"/>
</dbReference>
<dbReference type="Gene3D" id="2.40.30.20">
    <property type="match status" value="1"/>
</dbReference>
<dbReference type="Gene3D" id="1.20.150.20">
    <property type="entry name" value="ATP synthase alpha/beta chain, C-terminal domain"/>
    <property type="match status" value="1"/>
</dbReference>
<dbReference type="Gene3D" id="3.40.50.300">
    <property type="entry name" value="P-loop containing nucleotide triphosphate hydrolases"/>
    <property type="match status" value="1"/>
</dbReference>
<dbReference type="HAMAP" id="MF_01346">
    <property type="entry name" value="ATP_synth_alpha_bact"/>
    <property type="match status" value="1"/>
</dbReference>
<dbReference type="InterPro" id="IPR023366">
    <property type="entry name" value="ATP_synth_asu-like_sf"/>
</dbReference>
<dbReference type="InterPro" id="IPR000793">
    <property type="entry name" value="ATP_synth_asu_C"/>
</dbReference>
<dbReference type="InterPro" id="IPR038376">
    <property type="entry name" value="ATP_synth_asu_C_sf"/>
</dbReference>
<dbReference type="InterPro" id="IPR033732">
    <property type="entry name" value="ATP_synth_F1_a_nt-bd_dom"/>
</dbReference>
<dbReference type="InterPro" id="IPR005294">
    <property type="entry name" value="ATP_synth_F1_asu"/>
</dbReference>
<dbReference type="InterPro" id="IPR020003">
    <property type="entry name" value="ATPase_a/bsu_AS"/>
</dbReference>
<dbReference type="InterPro" id="IPR004100">
    <property type="entry name" value="ATPase_F1/V1/A1_a/bsu_N"/>
</dbReference>
<dbReference type="InterPro" id="IPR036121">
    <property type="entry name" value="ATPase_F1/V1/A1_a/bsu_N_sf"/>
</dbReference>
<dbReference type="InterPro" id="IPR000194">
    <property type="entry name" value="ATPase_F1/V1/A1_a/bsu_nucl-bd"/>
</dbReference>
<dbReference type="InterPro" id="IPR027417">
    <property type="entry name" value="P-loop_NTPase"/>
</dbReference>
<dbReference type="NCBIfam" id="TIGR00962">
    <property type="entry name" value="atpA"/>
    <property type="match status" value="1"/>
</dbReference>
<dbReference type="NCBIfam" id="NF009884">
    <property type="entry name" value="PRK13343.1"/>
    <property type="match status" value="1"/>
</dbReference>
<dbReference type="PANTHER" id="PTHR48082">
    <property type="entry name" value="ATP SYNTHASE SUBUNIT ALPHA, MITOCHONDRIAL"/>
    <property type="match status" value="1"/>
</dbReference>
<dbReference type="PANTHER" id="PTHR48082:SF2">
    <property type="entry name" value="ATP SYNTHASE SUBUNIT ALPHA, MITOCHONDRIAL"/>
    <property type="match status" value="1"/>
</dbReference>
<dbReference type="Pfam" id="PF00006">
    <property type="entry name" value="ATP-synt_ab"/>
    <property type="match status" value="1"/>
</dbReference>
<dbReference type="Pfam" id="PF00306">
    <property type="entry name" value="ATP-synt_ab_C"/>
    <property type="match status" value="1"/>
</dbReference>
<dbReference type="Pfam" id="PF02874">
    <property type="entry name" value="ATP-synt_ab_N"/>
    <property type="match status" value="1"/>
</dbReference>
<dbReference type="PIRSF" id="PIRSF039088">
    <property type="entry name" value="F_ATPase_subunit_alpha"/>
    <property type="match status" value="1"/>
</dbReference>
<dbReference type="SUPFAM" id="SSF47917">
    <property type="entry name" value="C-terminal domain of alpha and beta subunits of F1 ATP synthase"/>
    <property type="match status" value="1"/>
</dbReference>
<dbReference type="SUPFAM" id="SSF50615">
    <property type="entry name" value="N-terminal domain of alpha and beta subunits of F1 ATP synthase"/>
    <property type="match status" value="1"/>
</dbReference>
<dbReference type="SUPFAM" id="SSF52540">
    <property type="entry name" value="P-loop containing nucleoside triphosphate hydrolases"/>
    <property type="match status" value="1"/>
</dbReference>
<dbReference type="PROSITE" id="PS00152">
    <property type="entry name" value="ATPASE_ALPHA_BETA"/>
    <property type="match status" value="1"/>
</dbReference>
<keyword id="KW-0066">ATP synthesis</keyword>
<keyword id="KW-0067">ATP-binding</keyword>
<keyword id="KW-0139">CF(1)</keyword>
<keyword id="KW-0150">Chloroplast</keyword>
<keyword id="KW-0375">Hydrogen ion transport</keyword>
<keyword id="KW-0406">Ion transport</keyword>
<keyword id="KW-0472">Membrane</keyword>
<keyword id="KW-0547">Nucleotide-binding</keyword>
<keyword id="KW-0934">Plastid</keyword>
<keyword id="KW-0793">Thylakoid</keyword>
<keyword id="KW-1278">Translocase</keyword>
<keyword id="KW-0813">Transport</keyword>
<evidence type="ECO:0000255" key="1">
    <source>
        <dbReference type="HAMAP-Rule" id="MF_01346"/>
    </source>
</evidence>
<protein>
    <recommendedName>
        <fullName evidence="1">ATP synthase subunit alpha, chloroplastic</fullName>
        <ecNumber evidence="1">7.1.2.2</ecNumber>
    </recommendedName>
    <alternativeName>
        <fullName evidence="1">ATP synthase F1 sector subunit alpha</fullName>
    </alternativeName>
    <alternativeName>
        <fullName evidence="1">F-ATPase subunit alpha</fullName>
    </alternativeName>
</protein>
<name>ATPA_POPAL</name>
<reference key="1">
    <citation type="submission" date="2005-03" db="EMBL/GenBank/DDBJ databases">
        <title>Complete structure of the chloroplast genome of Populus alba.</title>
        <authorList>
            <person name="Okumura S."/>
            <person name="Yamashita A."/>
            <person name="Kanamoto H."/>
            <person name="Hattori M."/>
            <person name="Takase H."/>
            <person name="Tomizawa K."/>
        </authorList>
    </citation>
    <scope>NUCLEOTIDE SEQUENCE [LARGE SCALE GENOMIC DNA]</scope>
</reference>
<proteinExistence type="inferred from homology"/>